<accession>Q8NZD8</accession>
<comment type="catalytic activity">
    <reaction evidence="1">
        <text>aldehydo-D-galactose 6-phosphate = keto-D-tagatose 6-phosphate</text>
        <dbReference type="Rhea" id="RHEA:13033"/>
        <dbReference type="ChEBI" id="CHEBI:58255"/>
        <dbReference type="ChEBI" id="CHEBI:134283"/>
        <dbReference type="EC" id="5.3.1.26"/>
    </reaction>
</comment>
<comment type="pathway">
    <text evidence="1">Carbohydrate metabolism; D-galactose 6-phosphate degradation; D-tagatose 6-phosphate from D-galactose 6-phosphate: step 1/1.</text>
</comment>
<comment type="subunit">
    <text evidence="1">Heteromultimeric protein consisting of LacA and LacB.</text>
</comment>
<comment type="similarity">
    <text evidence="1">Belongs to the LacAB/RpiB family.</text>
</comment>
<gene>
    <name evidence="1" type="primary">lacB2</name>
    <name type="ordered locus">spyM18_1990</name>
</gene>
<proteinExistence type="inferred from homology"/>
<organism>
    <name type="scientific">Streptococcus pyogenes serotype M18 (strain MGAS8232)</name>
    <dbReference type="NCBI Taxonomy" id="186103"/>
    <lineage>
        <taxon>Bacteria</taxon>
        <taxon>Bacillati</taxon>
        <taxon>Bacillota</taxon>
        <taxon>Bacilli</taxon>
        <taxon>Lactobacillales</taxon>
        <taxon>Streptococcaceae</taxon>
        <taxon>Streptococcus</taxon>
    </lineage>
</organism>
<feature type="chain" id="PRO_0000208156" description="Galactose-6-phosphate isomerase subunit LacB 2">
    <location>
        <begin position="1"/>
        <end position="171"/>
    </location>
</feature>
<dbReference type="EC" id="5.3.1.26" evidence="1"/>
<dbReference type="EMBL" id="AE009949">
    <property type="protein sequence ID" value="AAL98475.1"/>
    <property type="molecule type" value="Genomic_DNA"/>
</dbReference>
<dbReference type="SMR" id="Q8NZD8"/>
<dbReference type="KEGG" id="spm:spyM18_1990"/>
<dbReference type="HOGENOM" id="CLU_091396_2_0_9"/>
<dbReference type="UniPathway" id="UPA00702">
    <property type="reaction ID" value="UER00714"/>
</dbReference>
<dbReference type="GO" id="GO:0050044">
    <property type="term" value="F:galactose-6-phosphate isomerase activity"/>
    <property type="evidence" value="ECO:0007669"/>
    <property type="project" value="UniProtKB-UniRule"/>
</dbReference>
<dbReference type="GO" id="GO:0004751">
    <property type="term" value="F:ribose-5-phosphate isomerase activity"/>
    <property type="evidence" value="ECO:0007669"/>
    <property type="project" value="TreeGrafter"/>
</dbReference>
<dbReference type="GO" id="GO:0019316">
    <property type="term" value="P:D-allose catabolic process"/>
    <property type="evidence" value="ECO:0007669"/>
    <property type="project" value="TreeGrafter"/>
</dbReference>
<dbReference type="GO" id="GO:0019388">
    <property type="term" value="P:galactose catabolic process"/>
    <property type="evidence" value="ECO:0007669"/>
    <property type="project" value="UniProtKB-UniPathway"/>
</dbReference>
<dbReference type="GO" id="GO:0019512">
    <property type="term" value="P:lactose catabolic process via tagatose-6-phosphate"/>
    <property type="evidence" value="ECO:0007669"/>
    <property type="project" value="UniProtKB-UniRule"/>
</dbReference>
<dbReference type="GO" id="GO:0009052">
    <property type="term" value="P:pentose-phosphate shunt, non-oxidative branch"/>
    <property type="evidence" value="ECO:0007669"/>
    <property type="project" value="TreeGrafter"/>
</dbReference>
<dbReference type="Gene3D" id="3.40.1400.10">
    <property type="entry name" value="Sugar-phosphate isomerase, RpiB/LacA/LacB"/>
    <property type="match status" value="1"/>
</dbReference>
<dbReference type="HAMAP" id="MF_01556">
    <property type="entry name" value="LacB"/>
    <property type="match status" value="1"/>
</dbReference>
<dbReference type="InterPro" id="IPR004784">
    <property type="entry name" value="LacB"/>
</dbReference>
<dbReference type="InterPro" id="IPR003500">
    <property type="entry name" value="RpiB_LacA_LacB"/>
</dbReference>
<dbReference type="InterPro" id="IPR036569">
    <property type="entry name" value="RpiB_LacA_LacB_sf"/>
</dbReference>
<dbReference type="NCBIfam" id="NF004051">
    <property type="entry name" value="PRK05571.1"/>
    <property type="match status" value="1"/>
</dbReference>
<dbReference type="NCBIfam" id="NF006381">
    <property type="entry name" value="PRK08622.1"/>
    <property type="match status" value="1"/>
</dbReference>
<dbReference type="NCBIfam" id="TIGR00689">
    <property type="entry name" value="rpiB_lacA_lacB"/>
    <property type="match status" value="1"/>
</dbReference>
<dbReference type="PANTHER" id="PTHR30345:SF0">
    <property type="entry name" value="DNA DAMAGE-REPAIR_TOLERATION PROTEIN DRT102"/>
    <property type="match status" value="1"/>
</dbReference>
<dbReference type="PANTHER" id="PTHR30345">
    <property type="entry name" value="RIBOSE-5-PHOSPHATE ISOMERASE B"/>
    <property type="match status" value="1"/>
</dbReference>
<dbReference type="Pfam" id="PF02502">
    <property type="entry name" value="LacAB_rpiB"/>
    <property type="match status" value="1"/>
</dbReference>
<dbReference type="PIRSF" id="PIRSF005384">
    <property type="entry name" value="RpiB_LacA_B"/>
    <property type="match status" value="1"/>
</dbReference>
<dbReference type="SUPFAM" id="SSF89623">
    <property type="entry name" value="Ribose/Galactose isomerase RpiB/AlsB"/>
    <property type="match status" value="1"/>
</dbReference>
<keyword id="KW-0413">Isomerase</keyword>
<keyword id="KW-0423">Lactose metabolism</keyword>
<name>LACB2_STRP8</name>
<protein>
    <recommendedName>
        <fullName evidence="1">Galactose-6-phosphate isomerase subunit LacB 2</fullName>
        <ecNumber evidence="1">5.3.1.26</ecNumber>
    </recommendedName>
</protein>
<evidence type="ECO:0000255" key="1">
    <source>
        <dbReference type="HAMAP-Rule" id="MF_01556"/>
    </source>
</evidence>
<reference key="1">
    <citation type="journal article" date="2002" name="Proc. Natl. Acad. Sci. U.S.A.">
        <title>Genome sequence and comparative microarray analysis of serotype M18 group A Streptococcus strains associated with acute rheumatic fever outbreaks.</title>
        <authorList>
            <person name="Smoot J.C."/>
            <person name="Barbian K.D."/>
            <person name="Van Gompel J.J."/>
            <person name="Smoot L.M."/>
            <person name="Chaussee M.S."/>
            <person name="Sylva G.L."/>
            <person name="Sturdevant D.E."/>
            <person name="Ricklefs S.M."/>
            <person name="Porcella S.F."/>
            <person name="Parkins L.D."/>
            <person name="Beres S.B."/>
            <person name="Campbell D.S."/>
            <person name="Smith T.M."/>
            <person name="Zhang Q."/>
            <person name="Kapur V."/>
            <person name="Daly J.A."/>
            <person name="Veasy L.G."/>
            <person name="Musser J.M."/>
        </authorList>
    </citation>
    <scope>NUCLEOTIDE SEQUENCE [LARGE SCALE GENOMIC DNA]</scope>
    <source>
        <strain>MGAS8232</strain>
    </source>
</reference>
<sequence>MKIAVGCDHIVTYEKIAVVDYLKTQGHEIIDCGTYDNVRTHYPIFGKKVGEAVASGKAELGVVICGTGVGITNAVNKVPGIRAALVRDMTSAIYSKEELNANVIGFGGKIIGGLLMNDIIDAFLAAEYKPTEENKKWIEKMDSLQHASQDQNNPHFFDEFLEKWVRGEYHD</sequence>